<feature type="chain" id="PRO_1000077036" description="3-dehydroquinate dehydratase">
    <location>
        <begin position="1"/>
        <end position="145"/>
    </location>
</feature>
<feature type="active site" description="Proton acceptor" evidence="1">
    <location>
        <position position="22"/>
    </location>
</feature>
<feature type="active site" description="Proton donor" evidence="1">
    <location>
        <position position="97"/>
    </location>
</feature>
<feature type="binding site" evidence="1">
    <location>
        <position position="71"/>
    </location>
    <ligand>
        <name>substrate</name>
    </ligand>
</feature>
<feature type="binding site" evidence="1">
    <location>
        <position position="77"/>
    </location>
    <ligand>
        <name>substrate</name>
    </ligand>
</feature>
<feature type="binding site" evidence="1">
    <location>
        <position position="84"/>
    </location>
    <ligand>
        <name>substrate</name>
    </ligand>
</feature>
<feature type="binding site" evidence="1">
    <location>
        <begin position="98"/>
        <end position="99"/>
    </location>
    <ligand>
        <name>substrate</name>
    </ligand>
</feature>
<feature type="binding site" evidence="1">
    <location>
        <position position="108"/>
    </location>
    <ligand>
        <name>substrate</name>
    </ligand>
</feature>
<feature type="site" description="Transition state stabilizer" evidence="1">
    <location>
        <position position="17"/>
    </location>
</feature>
<reference key="1">
    <citation type="journal article" date="2009" name="PLoS ONE">
        <title>Complete genome sequence of Francisella tularensis subspecies holarctica FTNF002-00.</title>
        <authorList>
            <person name="Barabote R.D."/>
            <person name="Xie G."/>
            <person name="Brettin T.S."/>
            <person name="Hinrichs S.H."/>
            <person name="Fey P.D."/>
            <person name="Jay J.J."/>
            <person name="Engle J.L."/>
            <person name="Godbole S.D."/>
            <person name="Noronha J.M."/>
            <person name="Scheuermann R.H."/>
            <person name="Zhou L.W."/>
            <person name="Lion C."/>
            <person name="Dempsey M.P."/>
        </authorList>
    </citation>
    <scope>NUCLEOTIDE SEQUENCE [LARGE SCALE GENOMIC DNA]</scope>
    <source>
        <strain>FTNF002-00 / FTA</strain>
    </source>
</reference>
<comment type="function">
    <text evidence="1">Catalyzes a trans-dehydration via an enolate intermediate.</text>
</comment>
<comment type="catalytic activity">
    <reaction evidence="1">
        <text>3-dehydroquinate = 3-dehydroshikimate + H2O</text>
        <dbReference type="Rhea" id="RHEA:21096"/>
        <dbReference type="ChEBI" id="CHEBI:15377"/>
        <dbReference type="ChEBI" id="CHEBI:16630"/>
        <dbReference type="ChEBI" id="CHEBI:32364"/>
        <dbReference type="EC" id="4.2.1.10"/>
    </reaction>
</comment>
<comment type="pathway">
    <text evidence="1">Metabolic intermediate biosynthesis; chorismate biosynthesis; chorismate from D-erythrose 4-phosphate and phosphoenolpyruvate: step 3/7.</text>
</comment>
<comment type="subunit">
    <text evidence="1">Homododecamer.</text>
</comment>
<comment type="similarity">
    <text evidence="1">Belongs to the type-II 3-dehydroquinase family.</text>
</comment>
<gene>
    <name evidence="1" type="primary">aroQ</name>
    <name type="ordered locus">FTA_1679</name>
</gene>
<organism>
    <name type="scientific">Francisella tularensis subsp. holarctica (strain FTNF002-00 / FTA)</name>
    <dbReference type="NCBI Taxonomy" id="458234"/>
    <lineage>
        <taxon>Bacteria</taxon>
        <taxon>Pseudomonadati</taxon>
        <taxon>Pseudomonadota</taxon>
        <taxon>Gammaproteobacteria</taxon>
        <taxon>Thiotrichales</taxon>
        <taxon>Francisellaceae</taxon>
        <taxon>Francisella</taxon>
    </lineage>
</organism>
<keyword id="KW-0028">Amino-acid biosynthesis</keyword>
<keyword id="KW-0057">Aromatic amino acid biosynthesis</keyword>
<keyword id="KW-0456">Lyase</keyword>
<name>AROQ_FRATF</name>
<dbReference type="EC" id="4.2.1.10" evidence="1"/>
<dbReference type="EMBL" id="CP000803">
    <property type="protein sequence ID" value="ABU62154.1"/>
    <property type="molecule type" value="Genomic_DNA"/>
</dbReference>
<dbReference type="RefSeq" id="WP_003016972.1">
    <property type="nucleotide sequence ID" value="NC_009749.1"/>
</dbReference>
<dbReference type="SMR" id="A7NDV1"/>
<dbReference type="GeneID" id="75263952"/>
<dbReference type="KEGG" id="fta:FTA_1679"/>
<dbReference type="HOGENOM" id="CLU_090968_1_0_6"/>
<dbReference type="UniPathway" id="UPA00053">
    <property type="reaction ID" value="UER00086"/>
</dbReference>
<dbReference type="GO" id="GO:0003855">
    <property type="term" value="F:3-dehydroquinate dehydratase activity"/>
    <property type="evidence" value="ECO:0007669"/>
    <property type="project" value="UniProtKB-UniRule"/>
</dbReference>
<dbReference type="GO" id="GO:0008652">
    <property type="term" value="P:amino acid biosynthetic process"/>
    <property type="evidence" value="ECO:0007669"/>
    <property type="project" value="UniProtKB-KW"/>
</dbReference>
<dbReference type="GO" id="GO:0009073">
    <property type="term" value="P:aromatic amino acid family biosynthetic process"/>
    <property type="evidence" value="ECO:0007669"/>
    <property type="project" value="UniProtKB-KW"/>
</dbReference>
<dbReference type="GO" id="GO:0009423">
    <property type="term" value="P:chorismate biosynthetic process"/>
    <property type="evidence" value="ECO:0007669"/>
    <property type="project" value="UniProtKB-UniRule"/>
</dbReference>
<dbReference type="GO" id="GO:0019631">
    <property type="term" value="P:quinate catabolic process"/>
    <property type="evidence" value="ECO:0007669"/>
    <property type="project" value="TreeGrafter"/>
</dbReference>
<dbReference type="CDD" id="cd00466">
    <property type="entry name" value="DHQase_II"/>
    <property type="match status" value="1"/>
</dbReference>
<dbReference type="Gene3D" id="3.40.50.9100">
    <property type="entry name" value="Dehydroquinase, class II"/>
    <property type="match status" value="1"/>
</dbReference>
<dbReference type="HAMAP" id="MF_00169">
    <property type="entry name" value="AroQ"/>
    <property type="match status" value="1"/>
</dbReference>
<dbReference type="InterPro" id="IPR001874">
    <property type="entry name" value="DHquinase_II"/>
</dbReference>
<dbReference type="InterPro" id="IPR018509">
    <property type="entry name" value="DHquinase_II_CS"/>
</dbReference>
<dbReference type="InterPro" id="IPR036441">
    <property type="entry name" value="DHquinase_II_sf"/>
</dbReference>
<dbReference type="NCBIfam" id="TIGR01088">
    <property type="entry name" value="aroQ"/>
    <property type="match status" value="1"/>
</dbReference>
<dbReference type="NCBIfam" id="NF003804">
    <property type="entry name" value="PRK05395.1-1"/>
    <property type="match status" value="1"/>
</dbReference>
<dbReference type="NCBIfam" id="NF003805">
    <property type="entry name" value="PRK05395.1-2"/>
    <property type="match status" value="1"/>
</dbReference>
<dbReference type="NCBIfam" id="NF003806">
    <property type="entry name" value="PRK05395.1-3"/>
    <property type="match status" value="1"/>
</dbReference>
<dbReference type="NCBIfam" id="NF003807">
    <property type="entry name" value="PRK05395.1-4"/>
    <property type="match status" value="1"/>
</dbReference>
<dbReference type="PANTHER" id="PTHR21272">
    <property type="entry name" value="CATABOLIC 3-DEHYDROQUINASE"/>
    <property type="match status" value="1"/>
</dbReference>
<dbReference type="PANTHER" id="PTHR21272:SF3">
    <property type="entry name" value="CATABOLIC 3-DEHYDROQUINASE"/>
    <property type="match status" value="1"/>
</dbReference>
<dbReference type="Pfam" id="PF01220">
    <property type="entry name" value="DHquinase_II"/>
    <property type="match status" value="1"/>
</dbReference>
<dbReference type="PIRSF" id="PIRSF001399">
    <property type="entry name" value="DHquinase_II"/>
    <property type="match status" value="1"/>
</dbReference>
<dbReference type="SUPFAM" id="SSF52304">
    <property type="entry name" value="Type II 3-dehydroquinate dehydratase"/>
    <property type="match status" value="1"/>
</dbReference>
<dbReference type="PROSITE" id="PS01029">
    <property type="entry name" value="DEHYDROQUINASE_II"/>
    <property type="match status" value="1"/>
</dbReference>
<evidence type="ECO:0000255" key="1">
    <source>
        <dbReference type="HAMAP-Rule" id="MF_00169"/>
    </source>
</evidence>
<accession>A7NDV1</accession>
<sequence length="145" mass="16330">MDVLVINGPNLNLLGTRQPQFYGHKTLADINNDLLKIAKENNINIDFYQSNHEGQIIDKIQQTAAKIIIINPAAFTHTSVAIRDAFLAINKPFIEIHLSNIYNREEFRTKSFLSDIAYGCIFGFGPNGYTLALIEAINYINMKGE</sequence>
<protein>
    <recommendedName>
        <fullName evidence="1">3-dehydroquinate dehydratase</fullName>
        <shortName evidence="1">3-dehydroquinase</shortName>
        <ecNumber evidence="1">4.2.1.10</ecNumber>
    </recommendedName>
    <alternativeName>
        <fullName evidence="1">Type II DHQase</fullName>
    </alternativeName>
</protein>
<proteinExistence type="inferred from homology"/>